<gene>
    <name evidence="1" type="primary">mutS2</name>
    <name evidence="1" type="synonym">rqcU</name>
    <name type="ordered locus">Lm4b_01237</name>
</gene>
<protein>
    <recommendedName>
        <fullName evidence="1">Endonuclease MutS2</fullName>
        <ecNumber evidence="1">3.1.-.-</ecNumber>
    </recommendedName>
    <alternativeName>
        <fullName evidence="1">Ribosome-associated protein quality control-upstream factor</fullName>
        <shortName evidence="1">RQC-upstream factor</shortName>
        <shortName evidence="1">RqcU</shortName>
        <ecNumber evidence="1">3.6.4.-</ecNumber>
    </alternativeName>
</protein>
<keyword id="KW-0067">ATP-binding</keyword>
<keyword id="KW-0238">DNA-binding</keyword>
<keyword id="KW-0255">Endonuclease</keyword>
<keyword id="KW-0378">Hydrolase</keyword>
<keyword id="KW-0540">Nuclease</keyword>
<keyword id="KW-0547">Nucleotide-binding</keyword>
<keyword id="KW-0694">RNA-binding</keyword>
<keyword id="KW-0699">rRNA-binding</keyword>
<evidence type="ECO:0000255" key="1">
    <source>
        <dbReference type="HAMAP-Rule" id="MF_00092"/>
    </source>
</evidence>
<sequence>MEKKVEAILEFDKIKKQLTEFASSSLGEQAILELAPATDFQVVQKTQLETEEGAKIIRLRGSAPITGLTDVFAHLKRLEIGGDLNGLEIYQIGSNLRVSRQMKNFMNDLLEIGVELPLLGALSDELLVLKEVEEDIAISVDESGKVLDTASEALSTIRRTLRRTEDRVREKLESYLRDRNASKMLSDAVITIRNDRYVIPVKQEYKGHYGGIVHDQSASGQTLFIEPQSVVDLNNERKALQAKEKQEIERILAEISASLAAWINEIHHNTFILGRFDFIFAKARFGKAMKAVTPHLSDAGVVHLIAARHPLLDAAKVVANDIYLGEDFTTIVITGPNTGGKTITLKTLGLLTLMAQSGLQIPAQEDSTIAVFEHVFADIGDEQSIEQSLSTFSSHMTNIVSILGNVNQKSLILYDELGAGTDPQEGAALAIAILDASHAKGASVVATTHYPELKAYGYNRVHATNASVEFNVETLSPTYKLLIGVPGRSNAFDISRRLGLSENIITEARSLVDTESADLNDMISSLEEKRNLAETEYEEARELARGADNLLKDLQKEISNYYQQKDKLIEQASEKAATIVEKAEAEAEEIIHELRTMQLNGAAGIKEHELIDAKTRLGNAKPKTINKTIPQAPKQKPHVFQEGDNVRVLSLGQKGTLLNKISDKEWNVQIGIIKMKIKTTDLEYIQPEKPKKQRIITSVHSSGSPAKSELDLRGERYEDALQKVDKYLDEALLAGYPQVAIIHGKGTGALRTGVTEYLKNHRMVKSIRFGAAAEGGNGVTIVEFK</sequence>
<organism>
    <name type="scientific">Listeria monocytogenes serotype 4b (strain CLIP80459)</name>
    <dbReference type="NCBI Taxonomy" id="568819"/>
    <lineage>
        <taxon>Bacteria</taxon>
        <taxon>Bacillati</taxon>
        <taxon>Bacillota</taxon>
        <taxon>Bacilli</taxon>
        <taxon>Bacillales</taxon>
        <taxon>Listeriaceae</taxon>
        <taxon>Listeria</taxon>
    </lineage>
</organism>
<name>MUTS2_LISMC</name>
<comment type="function">
    <text evidence="1">Endonuclease that is involved in the suppression of homologous recombination and thus may have a key role in the control of bacterial genetic diversity.</text>
</comment>
<comment type="function">
    <text evidence="1">Acts as a ribosome collision sensor, splitting the ribosome into its 2 subunits. Detects stalled/collided 70S ribosomes which it binds and splits by an ATP-hydrolysis driven conformational change. Acts upstream of the ribosome quality control system (RQC), a ribosome-associated complex that mediates the extraction of incompletely synthesized nascent chains from stalled ribosomes and their subsequent degradation. Probably generates substrates for RQC.</text>
</comment>
<comment type="subunit">
    <text evidence="1">Homodimer. Binds to stalled ribosomes, contacting rRNA.</text>
</comment>
<comment type="similarity">
    <text evidence="1">Belongs to the DNA mismatch repair MutS family. MutS2 subfamily.</text>
</comment>
<accession>C1L2D7</accession>
<reference key="1">
    <citation type="journal article" date="2012" name="BMC Genomics">
        <title>Comparative genomics and transcriptomics of lineages I, II, and III strains of Listeria monocytogenes.</title>
        <authorList>
            <person name="Hain T."/>
            <person name="Ghai R."/>
            <person name="Billion A."/>
            <person name="Kuenne C.T."/>
            <person name="Steinweg C."/>
            <person name="Izar B."/>
            <person name="Mohamed W."/>
            <person name="Mraheil M."/>
            <person name="Domann E."/>
            <person name="Schaffrath S."/>
            <person name="Karst U."/>
            <person name="Goesmann A."/>
            <person name="Oehm S."/>
            <person name="Puhler A."/>
            <person name="Merkl R."/>
            <person name="Vorwerk S."/>
            <person name="Glaser P."/>
            <person name="Garrido P."/>
            <person name="Rusniok C."/>
            <person name="Buchrieser C."/>
            <person name="Goebel W."/>
            <person name="Chakraborty T."/>
        </authorList>
    </citation>
    <scope>NUCLEOTIDE SEQUENCE [LARGE SCALE GENOMIC DNA]</scope>
    <source>
        <strain>CLIP80459</strain>
    </source>
</reference>
<proteinExistence type="inferred from homology"/>
<feature type="chain" id="PRO_1000202683" description="Endonuclease MutS2">
    <location>
        <begin position="1"/>
        <end position="785"/>
    </location>
</feature>
<feature type="domain" description="Smr" evidence="1">
    <location>
        <begin position="710"/>
        <end position="785"/>
    </location>
</feature>
<feature type="binding site" evidence="1">
    <location>
        <begin position="335"/>
        <end position="342"/>
    </location>
    <ligand>
        <name>ATP</name>
        <dbReference type="ChEBI" id="CHEBI:30616"/>
    </ligand>
</feature>
<dbReference type="EC" id="3.1.-.-" evidence="1"/>
<dbReference type="EC" id="3.6.4.-" evidence="1"/>
<dbReference type="EMBL" id="FM242711">
    <property type="protein sequence ID" value="CAS05003.1"/>
    <property type="molecule type" value="Genomic_DNA"/>
</dbReference>
<dbReference type="RefSeq" id="WP_003726543.1">
    <property type="nucleotide sequence ID" value="NC_012488.1"/>
</dbReference>
<dbReference type="SMR" id="C1L2D7"/>
<dbReference type="KEGG" id="lmc:Lm4b_01237"/>
<dbReference type="HOGENOM" id="CLU_011252_2_1_9"/>
<dbReference type="GO" id="GO:0005524">
    <property type="term" value="F:ATP binding"/>
    <property type="evidence" value="ECO:0007669"/>
    <property type="project" value="UniProtKB-UniRule"/>
</dbReference>
<dbReference type="GO" id="GO:0016887">
    <property type="term" value="F:ATP hydrolysis activity"/>
    <property type="evidence" value="ECO:0007669"/>
    <property type="project" value="InterPro"/>
</dbReference>
<dbReference type="GO" id="GO:0140664">
    <property type="term" value="F:ATP-dependent DNA damage sensor activity"/>
    <property type="evidence" value="ECO:0007669"/>
    <property type="project" value="InterPro"/>
</dbReference>
<dbReference type="GO" id="GO:0004519">
    <property type="term" value="F:endonuclease activity"/>
    <property type="evidence" value="ECO:0007669"/>
    <property type="project" value="UniProtKB-UniRule"/>
</dbReference>
<dbReference type="GO" id="GO:0030983">
    <property type="term" value="F:mismatched DNA binding"/>
    <property type="evidence" value="ECO:0007669"/>
    <property type="project" value="InterPro"/>
</dbReference>
<dbReference type="GO" id="GO:0043023">
    <property type="term" value="F:ribosomal large subunit binding"/>
    <property type="evidence" value="ECO:0007669"/>
    <property type="project" value="UniProtKB-UniRule"/>
</dbReference>
<dbReference type="GO" id="GO:0019843">
    <property type="term" value="F:rRNA binding"/>
    <property type="evidence" value="ECO:0007669"/>
    <property type="project" value="UniProtKB-UniRule"/>
</dbReference>
<dbReference type="GO" id="GO:0006298">
    <property type="term" value="P:mismatch repair"/>
    <property type="evidence" value="ECO:0007669"/>
    <property type="project" value="InterPro"/>
</dbReference>
<dbReference type="GO" id="GO:0045910">
    <property type="term" value="P:negative regulation of DNA recombination"/>
    <property type="evidence" value="ECO:0007669"/>
    <property type="project" value="InterPro"/>
</dbReference>
<dbReference type="GO" id="GO:0072344">
    <property type="term" value="P:rescue of stalled ribosome"/>
    <property type="evidence" value="ECO:0007669"/>
    <property type="project" value="UniProtKB-UniRule"/>
</dbReference>
<dbReference type="FunFam" id="3.40.50.300:FF:000830">
    <property type="entry name" value="Endonuclease MutS2"/>
    <property type="match status" value="1"/>
</dbReference>
<dbReference type="Gene3D" id="3.30.1370.110">
    <property type="match status" value="1"/>
</dbReference>
<dbReference type="Gene3D" id="3.40.50.300">
    <property type="entry name" value="P-loop containing nucleotide triphosphate hydrolases"/>
    <property type="match status" value="1"/>
</dbReference>
<dbReference type="HAMAP" id="MF_00092">
    <property type="entry name" value="MutS2"/>
    <property type="match status" value="1"/>
</dbReference>
<dbReference type="InterPro" id="IPR000432">
    <property type="entry name" value="DNA_mismatch_repair_MutS_C"/>
</dbReference>
<dbReference type="InterPro" id="IPR007696">
    <property type="entry name" value="DNA_mismatch_repair_MutS_core"/>
</dbReference>
<dbReference type="InterPro" id="IPR036187">
    <property type="entry name" value="DNA_mismatch_repair_MutS_sf"/>
</dbReference>
<dbReference type="InterPro" id="IPR046893">
    <property type="entry name" value="MSSS"/>
</dbReference>
<dbReference type="InterPro" id="IPR045076">
    <property type="entry name" value="MutS"/>
</dbReference>
<dbReference type="InterPro" id="IPR005747">
    <property type="entry name" value="MutS2"/>
</dbReference>
<dbReference type="InterPro" id="IPR027417">
    <property type="entry name" value="P-loop_NTPase"/>
</dbReference>
<dbReference type="InterPro" id="IPR002625">
    <property type="entry name" value="Smr_dom"/>
</dbReference>
<dbReference type="InterPro" id="IPR036063">
    <property type="entry name" value="Smr_dom_sf"/>
</dbReference>
<dbReference type="NCBIfam" id="TIGR01069">
    <property type="entry name" value="mutS2"/>
    <property type="match status" value="1"/>
</dbReference>
<dbReference type="PANTHER" id="PTHR48466:SF2">
    <property type="entry name" value="OS10G0509000 PROTEIN"/>
    <property type="match status" value="1"/>
</dbReference>
<dbReference type="PANTHER" id="PTHR48466">
    <property type="entry name" value="OS10G0509000 PROTEIN-RELATED"/>
    <property type="match status" value="1"/>
</dbReference>
<dbReference type="Pfam" id="PF20297">
    <property type="entry name" value="MSSS"/>
    <property type="match status" value="1"/>
</dbReference>
<dbReference type="Pfam" id="PF00488">
    <property type="entry name" value="MutS_V"/>
    <property type="match status" value="1"/>
</dbReference>
<dbReference type="Pfam" id="PF01713">
    <property type="entry name" value="Smr"/>
    <property type="match status" value="1"/>
</dbReference>
<dbReference type="PIRSF" id="PIRSF005814">
    <property type="entry name" value="MutS_YshD"/>
    <property type="match status" value="1"/>
</dbReference>
<dbReference type="SMART" id="SM00534">
    <property type="entry name" value="MUTSac"/>
    <property type="match status" value="1"/>
</dbReference>
<dbReference type="SMART" id="SM00533">
    <property type="entry name" value="MUTSd"/>
    <property type="match status" value="1"/>
</dbReference>
<dbReference type="SMART" id="SM00463">
    <property type="entry name" value="SMR"/>
    <property type="match status" value="1"/>
</dbReference>
<dbReference type="SUPFAM" id="SSF48334">
    <property type="entry name" value="DNA repair protein MutS, domain III"/>
    <property type="match status" value="1"/>
</dbReference>
<dbReference type="SUPFAM" id="SSF52540">
    <property type="entry name" value="P-loop containing nucleoside triphosphate hydrolases"/>
    <property type="match status" value="1"/>
</dbReference>
<dbReference type="SUPFAM" id="SSF160443">
    <property type="entry name" value="SMR domain-like"/>
    <property type="match status" value="1"/>
</dbReference>
<dbReference type="PROSITE" id="PS00486">
    <property type="entry name" value="DNA_MISMATCH_REPAIR_2"/>
    <property type="match status" value="1"/>
</dbReference>
<dbReference type="PROSITE" id="PS50828">
    <property type="entry name" value="SMR"/>
    <property type="match status" value="1"/>
</dbReference>